<accession>P51990</accession>
<accession>Q5D0C2</accession>
<protein>
    <recommendedName>
        <fullName>Heterogeneous nuclear ribonucleoprotein A2 homolog 2</fullName>
    </recommendedName>
    <alternativeName>
        <fullName>hnRNP A2(B)</fullName>
    </alternativeName>
</protein>
<comment type="function">
    <text evidence="1">Forms complexes (ribonucleosomes) with at least 20 other different hnRNP and heterogeneous nuclear RNA in the nucleus.</text>
</comment>
<comment type="subcellular location">
    <subcellularLocation>
        <location>Nucleus</location>
    </subcellularLocation>
    <text>Component of ribonucleosomes.</text>
</comment>
<comment type="alternative products">
    <event type="alternative splicing"/>
    <isoform>
        <id>P51990-1</id>
        <name>Long</name>
        <sequence type="displayed"/>
    </isoform>
    <isoform>
        <id>P51990-2</id>
        <name>Short</name>
        <sequence type="described" ref="VSP_005823"/>
    </isoform>
</comment>
<keyword id="KW-0025">Alternative splicing</keyword>
<keyword id="KW-0539">Nucleus</keyword>
<keyword id="KW-1185">Reference proteome</keyword>
<keyword id="KW-0677">Repeat</keyword>
<keyword id="KW-0687">Ribonucleoprotein</keyword>
<keyword id="KW-0694">RNA-binding</keyword>
<proteinExistence type="evidence at transcript level"/>
<sequence>MEREKEQFRKLFIGGLSFETTEESLRNFYEQWGQLTDCVVMRDPASKRSRGFGFVTFSCMNEVDAAMSARPHTIDGRVVEPKRAVAREESAKPGAHVTVKKLFVGGIKEDTEEHHLREYFEEYGKIESTEIITDKQSGKKRGFGFVTFNDHDPVDKIVLQKYHTINGHNAEVRKALSKQEMQDVQNTRNNRGGNFGFGDSRGGGNFGSGPGGNFRGGSDGYGGGRGYGDGYNGYGGGQGGTYLDEKQNLYSSGNFGGGPSYGAGGGRGGYGGGPSYGNQGGGYGGGYDNYGGGNYGGGGNYNDFGNYNQQSSSYGPMKSGGNFGGNRSMGGPYGGGNYGPGNGSGASGGGGYGGRNRY</sequence>
<name>RO22_XENLA</name>
<evidence type="ECO:0000250" key="1"/>
<evidence type="ECO:0000255" key="2">
    <source>
        <dbReference type="PROSITE-ProRule" id="PRU00176"/>
    </source>
</evidence>
<evidence type="ECO:0000256" key="3">
    <source>
        <dbReference type="SAM" id="MobiDB-lite"/>
    </source>
</evidence>
<evidence type="ECO:0000303" key="4">
    <source>
    </source>
</evidence>
<feature type="chain" id="PRO_0000081823" description="Heterogeneous nuclear ribonucleoprotein A2 homolog 2">
    <location>
        <begin position="1"/>
        <end position="358"/>
    </location>
</feature>
<feature type="domain" description="RRM 1" evidence="2">
    <location>
        <begin position="9"/>
        <end position="92"/>
    </location>
</feature>
<feature type="domain" description="RRM 2" evidence="2">
    <location>
        <begin position="100"/>
        <end position="179"/>
    </location>
</feature>
<feature type="region of interest" description="Disordered" evidence="3">
    <location>
        <begin position="182"/>
        <end position="217"/>
    </location>
</feature>
<feature type="region of interest" description="Nuclear targeting sequence" evidence="1">
    <location>
        <begin position="309"/>
        <end position="352"/>
    </location>
</feature>
<feature type="region of interest" description="Disordered" evidence="3">
    <location>
        <begin position="333"/>
        <end position="358"/>
    </location>
</feature>
<feature type="compositionally biased region" description="Gly residues" evidence="3">
    <location>
        <begin position="193"/>
        <end position="217"/>
    </location>
</feature>
<feature type="splice variant" id="VSP_005823" description="In isoform Short." evidence="4">
    <location>
        <begin position="241"/>
        <end position="252"/>
    </location>
</feature>
<organism>
    <name type="scientific">Xenopus laevis</name>
    <name type="common">African clawed frog</name>
    <dbReference type="NCBI Taxonomy" id="8355"/>
    <lineage>
        <taxon>Eukaryota</taxon>
        <taxon>Metazoa</taxon>
        <taxon>Chordata</taxon>
        <taxon>Craniata</taxon>
        <taxon>Vertebrata</taxon>
        <taxon>Euteleostomi</taxon>
        <taxon>Amphibia</taxon>
        <taxon>Batrachia</taxon>
        <taxon>Anura</taxon>
        <taxon>Pipoidea</taxon>
        <taxon>Pipidae</taxon>
        <taxon>Xenopodinae</taxon>
        <taxon>Xenopus</taxon>
        <taxon>Xenopus</taxon>
    </lineage>
</organism>
<reference key="1">
    <citation type="journal article" date="1993" name="Nucleic Acids Res.">
        <title>Three new members of the RNP protein family in Xenopus.</title>
        <authorList>
            <person name="Good P.J."/>
            <person name="Rebbert M.L."/>
            <person name="Dawid I.B."/>
        </authorList>
    </citation>
    <scope>NUCLEOTIDE SEQUENCE [MRNA] (ISOFORMS LONG AND SHORT)</scope>
</reference>
<reference key="2">
    <citation type="submission" date="2003-01" db="EMBL/GenBank/DDBJ databases">
        <authorList>
            <consortium name="NIH - Xenopus Gene Collection (XGC) project"/>
        </authorList>
    </citation>
    <scope>NUCLEOTIDE SEQUENCE [LARGE SCALE MRNA]</scope>
    <source>
        <tissue>Embryo</tissue>
    </source>
</reference>
<dbReference type="EMBL" id="L02955">
    <property type="protein sequence ID" value="AAB59951.1"/>
    <property type="molecule type" value="mRNA"/>
</dbReference>
<dbReference type="EMBL" id="BC043750">
    <property type="protein sequence ID" value="AAH43750.1"/>
    <property type="molecule type" value="mRNA"/>
</dbReference>
<dbReference type="PIR" id="S40776">
    <property type="entry name" value="S40776"/>
</dbReference>
<dbReference type="RefSeq" id="NP_001079471.1">
    <molecule id="P51990-1"/>
    <property type="nucleotide sequence ID" value="NM_001086002.1"/>
</dbReference>
<dbReference type="RefSeq" id="XP_018121695.1">
    <molecule id="P51990-2"/>
    <property type="nucleotide sequence ID" value="XM_018266206.2"/>
</dbReference>
<dbReference type="SMR" id="P51990"/>
<dbReference type="DNASU" id="379158"/>
<dbReference type="GeneID" id="379158"/>
<dbReference type="KEGG" id="xla:379158"/>
<dbReference type="AGR" id="Xenbase:XB-GENE-17340471"/>
<dbReference type="CTD" id="379158"/>
<dbReference type="Xenbase" id="XB-GENE-17340471">
    <property type="gene designation" value="hnrnpa2b1.L"/>
</dbReference>
<dbReference type="OMA" id="NTAPWGV"/>
<dbReference type="OrthoDB" id="1875751at2759"/>
<dbReference type="Proteomes" id="UP000186698">
    <property type="component" value="Chromosome 6L"/>
</dbReference>
<dbReference type="Bgee" id="379158">
    <property type="expression patterns" value="Expressed in gastrula and 19 other cell types or tissues"/>
</dbReference>
<dbReference type="GO" id="GO:0071013">
    <property type="term" value="C:catalytic step 2 spliceosome"/>
    <property type="evidence" value="ECO:0000318"/>
    <property type="project" value="GO_Central"/>
</dbReference>
<dbReference type="GO" id="GO:0003730">
    <property type="term" value="F:mRNA 3'-UTR binding"/>
    <property type="evidence" value="ECO:0007669"/>
    <property type="project" value="TreeGrafter"/>
</dbReference>
<dbReference type="GO" id="GO:0043047">
    <property type="term" value="F:single-stranded telomeric DNA binding"/>
    <property type="evidence" value="ECO:0007669"/>
    <property type="project" value="TreeGrafter"/>
</dbReference>
<dbReference type="GO" id="GO:0000398">
    <property type="term" value="P:mRNA splicing, via spliceosome"/>
    <property type="evidence" value="ECO:0000318"/>
    <property type="project" value="GO_Central"/>
</dbReference>
<dbReference type="GO" id="GO:0051028">
    <property type="term" value="P:mRNA transport"/>
    <property type="evidence" value="ECO:0007669"/>
    <property type="project" value="TreeGrafter"/>
</dbReference>
<dbReference type="CDD" id="cd12762">
    <property type="entry name" value="RRM1_hnRNPA2B1"/>
    <property type="match status" value="1"/>
</dbReference>
<dbReference type="CDD" id="cd12581">
    <property type="entry name" value="RRM2_hnRNPA2B1"/>
    <property type="match status" value="1"/>
</dbReference>
<dbReference type="FunFam" id="3.30.70.330:FF:000040">
    <property type="entry name" value="Heterogeneous nuclear ribonucleoprotein A2/B1"/>
    <property type="match status" value="1"/>
</dbReference>
<dbReference type="FunFam" id="3.30.70.330:FF:000108">
    <property type="entry name" value="Heterogeneous nuclear ribonucleoproteins A2/B1"/>
    <property type="match status" value="1"/>
</dbReference>
<dbReference type="Gene3D" id="3.30.70.330">
    <property type="match status" value="2"/>
</dbReference>
<dbReference type="InterPro" id="IPR021662">
    <property type="entry name" value="HnRNPA1/A2_C"/>
</dbReference>
<dbReference type="InterPro" id="IPR034486">
    <property type="entry name" value="hnRNPA2B1_RRM1"/>
</dbReference>
<dbReference type="InterPro" id="IPR012677">
    <property type="entry name" value="Nucleotide-bd_a/b_plait_sf"/>
</dbReference>
<dbReference type="InterPro" id="IPR035979">
    <property type="entry name" value="RBD_domain_sf"/>
</dbReference>
<dbReference type="InterPro" id="IPR000504">
    <property type="entry name" value="RRM_dom"/>
</dbReference>
<dbReference type="PANTHER" id="PTHR48026:SF13">
    <property type="entry name" value="HETEROGENEOUS NUCLEAR RIBONUCLEOPROTEINS A2_B1"/>
    <property type="match status" value="1"/>
</dbReference>
<dbReference type="PANTHER" id="PTHR48026">
    <property type="entry name" value="HOMOLOGOUS TO DROSOPHILA SQD (SQUID) PROTEIN"/>
    <property type="match status" value="1"/>
</dbReference>
<dbReference type="Pfam" id="PF11627">
    <property type="entry name" value="HnRNPA1_LC"/>
    <property type="match status" value="1"/>
</dbReference>
<dbReference type="Pfam" id="PF00076">
    <property type="entry name" value="RRM_1"/>
    <property type="match status" value="2"/>
</dbReference>
<dbReference type="SMART" id="SM00360">
    <property type="entry name" value="RRM"/>
    <property type="match status" value="2"/>
</dbReference>
<dbReference type="SUPFAM" id="SSF54928">
    <property type="entry name" value="RNA-binding domain, RBD"/>
    <property type="match status" value="2"/>
</dbReference>
<dbReference type="PROSITE" id="PS50102">
    <property type="entry name" value="RRM"/>
    <property type="match status" value="2"/>
</dbReference>